<dbReference type="EMBL" id="CP000937">
    <property type="protein sequence ID" value="ABZ87629.1"/>
    <property type="molecule type" value="Genomic_DNA"/>
</dbReference>
<dbReference type="SMR" id="B0TYF3"/>
<dbReference type="KEGG" id="fph:Fphi_1404"/>
<dbReference type="eggNOG" id="COG0484">
    <property type="taxonomic scope" value="Bacteria"/>
</dbReference>
<dbReference type="HOGENOM" id="CLU_017633_0_7_6"/>
<dbReference type="GO" id="GO:0005737">
    <property type="term" value="C:cytoplasm"/>
    <property type="evidence" value="ECO:0007669"/>
    <property type="project" value="UniProtKB-SubCell"/>
</dbReference>
<dbReference type="GO" id="GO:0005524">
    <property type="term" value="F:ATP binding"/>
    <property type="evidence" value="ECO:0007669"/>
    <property type="project" value="InterPro"/>
</dbReference>
<dbReference type="GO" id="GO:0031072">
    <property type="term" value="F:heat shock protein binding"/>
    <property type="evidence" value="ECO:0007669"/>
    <property type="project" value="InterPro"/>
</dbReference>
<dbReference type="GO" id="GO:0051082">
    <property type="term" value="F:unfolded protein binding"/>
    <property type="evidence" value="ECO:0007669"/>
    <property type="project" value="UniProtKB-UniRule"/>
</dbReference>
<dbReference type="GO" id="GO:0008270">
    <property type="term" value="F:zinc ion binding"/>
    <property type="evidence" value="ECO:0007669"/>
    <property type="project" value="UniProtKB-UniRule"/>
</dbReference>
<dbReference type="GO" id="GO:0051085">
    <property type="term" value="P:chaperone cofactor-dependent protein refolding"/>
    <property type="evidence" value="ECO:0007669"/>
    <property type="project" value="TreeGrafter"/>
</dbReference>
<dbReference type="GO" id="GO:0006260">
    <property type="term" value="P:DNA replication"/>
    <property type="evidence" value="ECO:0007669"/>
    <property type="project" value="UniProtKB-KW"/>
</dbReference>
<dbReference type="GO" id="GO:0042026">
    <property type="term" value="P:protein refolding"/>
    <property type="evidence" value="ECO:0007669"/>
    <property type="project" value="TreeGrafter"/>
</dbReference>
<dbReference type="GO" id="GO:0009408">
    <property type="term" value="P:response to heat"/>
    <property type="evidence" value="ECO:0007669"/>
    <property type="project" value="InterPro"/>
</dbReference>
<dbReference type="CDD" id="cd06257">
    <property type="entry name" value="DnaJ"/>
    <property type="match status" value="1"/>
</dbReference>
<dbReference type="CDD" id="cd10747">
    <property type="entry name" value="DnaJ_C"/>
    <property type="match status" value="1"/>
</dbReference>
<dbReference type="CDD" id="cd10719">
    <property type="entry name" value="DnaJ_zf"/>
    <property type="match status" value="1"/>
</dbReference>
<dbReference type="FunFam" id="1.10.287.110:FF:000034">
    <property type="entry name" value="Chaperone protein DnaJ"/>
    <property type="match status" value="1"/>
</dbReference>
<dbReference type="FunFam" id="2.10.230.10:FF:000002">
    <property type="entry name" value="Molecular chaperone DnaJ"/>
    <property type="match status" value="1"/>
</dbReference>
<dbReference type="FunFam" id="2.60.260.20:FF:000004">
    <property type="entry name" value="Molecular chaperone DnaJ"/>
    <property type="match status" value="1"/>
</dbReference>
<dbReference type="Gene3D" id="1.10.287.110">
    <property type="entry name" value="DnaJ domain"/>
    <property type="match status" value="1"/>
</dbReference>
<dbReference type="Gene3D" id="2.10.230.10">
    <property type="entry name" value="Heat shock protein DnaJ, cysteine-rich domain"/>
    <property type="match status" value="1"/>
</dbReference>
<dbReference type="Gene3D" id="2.60.260.20">
    <property type="entry name" value="Urease metallochaperone UreE, N-terminal domain"/>
    <property type="match status" value="2"/>
</dbReference>
<dbReference type="HAMAP" id="MF_01152">
    <property type="entry name" value="DnaJ"/>
    <property type="match status" value="1"/>
</dbReference>
<dbReference type="InterPro" id="IPR012724">
    <property type="entry name" value="DnaJ"/>
</dbReference>
<dbReference type="InterPro" id="IPR002939">
    <property type="entry name" value="DnaJ_C"/>
</dbReference>
<dbReference type="InterPro" id="IPR001623">
    <property type="entry name" value="DnaJ_domain"/>
</dbReference>
<dbReference type="InterPro" id="IPR018253">
    <property type="entry name" value="DnaJ_domain_CS"/>
</dbReference>
<dbReference type="InterPro" id="IPR008971">
    <property type="entry name" value="HSP40/DnaJ_pept-bd"/>
</dbReference>
<dbReference type="InterPro" id="IPR001305">
    <property type="entry name" value="HSP_DnaJ_Cys-rich_dom"/>
</dbReference>
<dbReference type="InterPro" id="IPR036410">
    <property type="entry name" value="HSP_DnaJ_Cys-rich_dom_sf"/>
</dbReference>
<dbReference type="InterPro" id="IPR036869">
    <property type="entry name" value="J_dom_sf"/>
</dbReference>
<dbReference type="NCBIfam" id="TIGR02349">
    <property type="entry name" value="DnaJ_bact"/>
    <property type="match status" value="1"/>
</dbReference>
<dbReference type="NCBIfam" id="NF008035">
    <property type="entry name" value="PRK10767.1"/>
    <property type="match status" value="1"/>
</dbReference>
<dbReference type="PANTHER" id="PTHR43096:SF48">
    <property type="entry name" value="CHAPERONE PROTEIN DNAJ"/>
    <property type="match status" value="1"/>
</dbReference>
<dbReference type="PANTHER" id="PTHR43096">
    <property type="entry name" value="DNAJ HOMOLOG 1, MITOCHONDRIAL-RELATED"/>
    <property type="match status" value="1"/>
</dbReference>
<dbReference type="Pfam" id="PF00226">
    <property type="entry name" value="DnaJ"/>
    <property type="match status" value="1"/>
</dbReference>
<dbReference type="Pfam" id="PF01556">
    <property type="entry name" value="DnaJ_C"/>
    <property type="match status" value="1"/>
</dbReference>
<dbReference type="Pfam" id="PF00684">
    <property type="entry name" value="DnaJ_CXXCXGXG"/>
    <property type="match status" value="1"/>
</dbReference>
<dbReference type="PRINTS" id="PR00625">
    <property type="entry name" value="JDOMAIN"/>
</dbReference>
<dbReference type="SMART" id="SM00271">
    <property type="entry name" value="DnaJ"/>
    <property type="match status" value="1"/>
</dbReference>
<dbReference type="SUPFAM" id="SSF46565">
    <property type="entry name" value="Chaperone J-domain"/>
    <property type="match status" value="1"/>
</dbReference>
<dbReference type="SUPFAM" id="SSF57938">
    <property type="entry name" value="DnaJ/Hsp40 cysteine-rich domain"/>
    <property type="match status" value="1"/>
</dbReference>
<dbReference type="SUPFAM" id="SSF49493">
    <property type="entry name" value="HSP40/DnaJ peptide-binding domain"/>
    <property type="match status" value="2"/>
</dbReference>
<dbReference type="PROSITE" id="PS00636">
    <property type="entry name" value="DNAJ_1"/>
    <property type="match status" value="1"/>
</dbReference>
<dbReference type="PROSITE" id="PS50076">
    <property type="entry name" value="DNAJ_2"/>
    <property type="match status" value="1"/>
</dbReference>
<dbReference type="PROSITE" id="PS51188">
    <property type="entry name" value="ZF_CR"/>
    <property type="match status" value="1"/>
</dbReference>
<comment type="function">
    <text evidence="1">Participates actively in the response to hyperosmotic and heat shock by preventing the aggregation of stress-denatured proteins and by disaggregating proteins, also in an autonomous, DnaK-independent fashion. Unfolded proteins bind initially to DnaJ; upon interaction with the DnaJ-bound protein, DnaK hydrolyzes its bound ATP, resulting in the formation of a stable complex. GrpE releases ADP from DnaK; ATP binding to DnaK triggers the release of the substrate protein, thus completing the reaction cycle. Several rounds of ATP-dependent interactions between DnaJ, DnaK and GrpE are required for fully efficient folding. Also involved, together with DnaK and GrpE, in the DNA replication of plasmids through activation of initiation proteins.</text>
</comment>
<comment type="cofactor">
    <cofactor evidence="1">
        <name>Zn(2+)</name>
        <dbReference type="ChEBI" id="CHEBI:29105"/>
    </cofactor>
    <text evidence="1">Binds 2 Zn(2+) ions per monomer.</text>
</comment>
<comment type="subunit">
    <text evidence="1">Homodimer.</text>
</comment>
<comment type="subcellular location">
    <subcellularLocation>
        <location evidence="1">Cytoplasm</location>
    </subcellularLocation>
</comment>
<comment type="domain">
    <text evidence="1">The J domain is necessary and sufficient to stimulate DnaK ATPase activity. Zinc center 1 plays an important role in the autonomous, DnaK-independent chaperone activity of DnaJ. Zinc center 2 is essential for interaction with DnaK and for DnaJ activity.</text>
</comment>
<comment type="similarity">
    <text evidence="1">Belongs to the DnaJ family.</text>
</comment>
<feature type="chain" id="PRO_1000085195" description="Chaperone protein DnaJ">
    <location>
        <begin position="1"/>
        <end position="374"/>
    </location>
</feature>
<feature type="domain" description="J" evidence="1">
    <location>
        <begin position="5"/>
        <end position="70"/>
    </location>
</feature>
<feature type="repeat" description="CXXCXGXG motif">
    <location>
        <begin position="143"/>
        <end position="150"/>
    </location>
</feature>
<feature type="repeat" description="CXXCXGXG motif">
    <location>
        <begin position="159"/>
        <end position="166"/>
    </location>
</feature>
<feature type="repeat" description="CXXCXGXG motif">
    <location>
        <begin position="181"/>
        <end position="188"/>
    </location>
</feature>
<feature type="repeat" description="CXXCXGXG motif">
    <location>
        <begin position="195"/>
        <end position="202"/>
    </location>
</feature>
<feature type="zinc finger region" description="CR-type" evidence="1">
    <location>
        <begin position="130"/>
        <end position="207"/>
    </location>
</feature>
<feature type="binding site" evidence="1">
    <location>
        <position position="143"/>
    </location>
    <ligand>
        <name>Zn(2+)</name>
        <dbReference type="ChEBI" id="CHEBI:29105"/>
        <label>1</label>
    </ligand>
</feature>
<feature type="binding site" evidence="1">
    <location>
        <position position="146"/>
    </location>
    <ligand>
        <name>Zn(2+)</name>
        <dbReference type="ChEBI" id="CHEBI:29105"/>
        <label>1</label>
    </ligand>
</feature>
<feature type="binding site" evidence="1">
    <location>
        <position position="159"/>
    </location>
    <ligand>
        <name>Zn(2+)</name>
        <dbReference type="ChEBI" id="CHEBI:29105"/>
        <label>2</label>
    </ligand>
</feature>
<feature type="binding site" evidence="1">
    <location>
        <position position="162"/>
    </location>
    <ligand>
        <name>Zn(2+)</name>
        <dbReference type="ChEBI" id="CHEBI:29105"/>
        <label>2</label>
    </ligand>
</feature>
<feature type="binding site" evidence="1">
    <location>
        <position position="181"/>
    </location>
    <ligand>
        <name>Zn(2+)</name>
        <dbReference type="ChEBI" id="CHEBI:29105"/>
        <label>2</label>
    </ligand>
</feature>
<feature type="binding site" evidence="1">
    <location>
        <position position="184"/>
    </location>
    <ligand>
        <name>Zn(2+)</name>
        <dbReference type="ChEBI" id="CHEBI:29105"/>
        <label>2</label>
    </ligand>
</feature>
<feature type="binding site" evidence="1">
    <location>
        <position position="195"/>
    </location>
    <ligand>
        <name>Zn(2+)</name>
        <dbReference type="ChEBI" id="CHEBI:29105"/>
        <label>1</label>
    </ligand>
</feature>
<feature type="binding site" evidence="1">
    <location>
        <position position="198"/>
    </location>
    <ligand>
        <name>Zn(2+)</name>
        <dbReference type="ChEBI" id="CHEBI:29105"/>
        <label>1</label>
    </ligand>
</feature>
<proteinExistence type="inferred from homology"/>
<keyword id="KW-0143">Chaperone</keyword>
<keyword id="KW-0963">Cytoplasm</keyword>
<keyword id="KW-0235">DNA replication</keyword>
<keyword id="KW-0479">Metal-binding</keyword>
<keyword id="KW-0677">Repeat</keyword>
<keyword id="KW-0346">Stress response</keyword>
<keyword id="KW-0862">Zinc</keyword>
<keyword id="KW-0863">Zinc-finger</keyword>
<accession>B0TYF3</accession>
<protein>
    <recommendedName>
        <fullName evidence="1">Chaperone protein DnaJ</fullName>
    </recommendedName>
</protein>
<evidence type="ECO:0000255" key="1">
    <source>
        <dbReference type="HAMAP-Rule" id="MF_01152"/>
    </source>
</evidence>
<name>DNAJ_FRAP2</name>
<organism>
    <name type="scientific">Francisella philomiragia subsp. philomiragia (strain ATCC 25017 / CCUG 19701 / FSC 153 / O#319-036)</name>
    <dbReference type="NCBI Taxonomy" id="484022"/>
    <lineage>
        <taxon>Bacteria</taxon>
        <taxon>Pseudomonadati</taxon>
        <taxon>Pseudomonadota</taxon>
        <taxon>Gammaproteobacteria</taxon>
        <taxon>Thiotrichales</taxon>
        <taxon>Francisellaceae</taxon>
        <taxon>Francisella</taxon>
    </lineage>
</organism>
<sequence>MQQKCYYEILNVSKTASGVEIKRAYRKLAMKYHPDRNPDDKEAEIKFKEISEAYEILSDDGKRSRYDQFGHAGVNQQGGAGSAGGFGGFEDIFDTFFGGGTSRGSNRSRASRGSDLEYTIEISLEEAFFGVEKEINIPRMESCDSCDGTGSKSKTKTTCHACHGQGTIRRQQGFFAFEQTCPVCNGTGSSIADPCDDCYGSGKIKKQKTIKVKIPEGVDNGDRIRLQGEGDSGSNGAMNGDLYIQILVKEHKIFERRDMNLYCEMPISFTKACLGGEIKVPTLDGEVVLKVVPETQTGKVFRLRERGMKSLRGQRRGDLLCKVVVETPINLNSEQKELLEKFADSLGEDYQSKHSPKSKTWFDNVKDYAKKFFE</sequence>
<gene>
    <name evidence="1" type="primary">dnaJ</name>
    <name type="ordered locus">Fphi_1404</name>
</gene>
<reference key="1">
    <citation type="submission" date="2007-12" db="EMBL/GenBank/DDBJ databases">
        <title>Complete sequence of chromosome of Francisella philomiragia subsp. philomiragia ATCC 25017.</title>
        <authorList>
            <consortium name="US DOE Joint Genome Institute"/>
            <person name="Copeland A."/>
            <person name="Lucas S."/>
            <person name="Lapidus A."/>
            <person name="Barry K."/>
            <person name="Detter J.C."/>
            <person name="Glavina del Rio T."/>
            <person name="Hammon N."/>
            <person name="Israni S."/>
            <person name="Dalin E."/>
            <person name="Tice H."/>
            <person name="Pitluck S."/>
            <person name="Chain P."/>
            <person name="Malfatti S."/>
            <person name="Shin M."/>
            <person name="Vergez L."/>
            <person name="Schmutz J."/>
            <person name="Larimer F."/>
            <person name="Land M."/>
            <person name="Hauser L."/>
            <person name="Richardson P."/>
        </authorList>
    </citation>
    <scope>NUCLEOTIDE SEQUENCE [LARGE SCALE GENOMIC DNA]</scope>
    <source>
        <strain>ATCC 25017 / CCUG 19701 / FSC 153 / O#319-036</strain>
    </source>
</reference>